<proteinExistence type="evidence at protein level"/>
<reference key="1">
    <citation type="journal article" date="2006" name="Nature">
        <title>The DNA sequence and biological annotation of human chromosome 1.</title>
        <authorList>
            <person name="Gregory S.G."/>
            <person name="Barlow K.F."/>
            <person name="McLay K.E."/>
            <person name="Kaul R."/>
            <person name="Swarbreck D."/>
            <person name="Dunham A."/>
            <person name="Scott C.E."/>
            <person name="Howe K.L."/>
            <person name="Woodfine K."/>
            <person name="Spencer C.C.A."/>
            <person name="Jones M.C."/>
            <person name="Gillson C."/>
            <person name="Searle S."/>
            <person name="Zhou Y."/>
            <person name="Kokocinski F."/>
            <person name="McDonald L."/>
            <person name="Evans R."/>
            <person name="Phillips K."/>
            <person name="Atkinson A."/>
            <person name="Cooper R."/>
            <person name="Jones C."/>
            <person name="Hall R.E."/>
            <person name="Andrews T.D."/>
            <person name="Lloyd C."/>
            <person name="Ainscough R."/>
            <person name="Almeida J.P."/>
            <person name="Ambrose K.D."/>
            <person name="Anderson F."/>
            <person name="Andrew R.W."/>
            <person name="Ashwell R.I.S."/>
            <person name="Aubin K."/>
            <person name="Babbage A.K."/>
            <person name="Bagguley C.L."/>
            <person name="Bailey J."/>
            <person name="Beasley H."/>
            <person name="Bethel G."/>
            <person name="Bird C.P."/>
            <person name="Bray-Allen S."/>
            <person name="Brown J.Y."/>
            <person name="Brown A.J."/>
            <person name="Buckley D."/>
            <person name="Burton J."/>
            <person name="Bye J."/>
            <person name="Carder C."/>
            <person name="Chapman J.C."/>
            <person name="Clark S.Y."/>
            <person name="Clarke G."/>
            <person name="Clee C."/>
            <person name="Cobley V."/>
            <person name="Collier R.E."/>
            <person name="Corby N."/>
            <person name="Coville G.J."/>
            <person name="Davies J."/>
            <person name="Deadman R."/>
            <person name="Dunn M."/>
            <person name="Earthrowl M."/>
            <person name="Ellington A.G."/>
            <person name="Errington H."/>
            <person name="Frankish A."/>
            <person name="Frankland J."/>
            <person name="French L."/>
            <person name="Garner P."/>
            <person name="Garnett J."/>
            <person name="Gay L."/>
            <person name="Ghori M.R.J."/>
            <person name="Gibson R."/>
            <person name="Gilby L.M."/>
            <person name="Gillett W."/>
            <person name="Glithero R.J."/>
            <person name="Grafham D.V."/>
            <person name="Griffiths C."/>
            <person name="Griffiths-Jones S."/>
            <person name="Grocock R."/>
            <person name="Hammond S."/>
            <person name="Harrison E.S.I."/>
            <person name="Hart E."/>
            <person name="Haugen E."/>
            <person name="Heath P.D."/>
            <person name="Holmes S."/>
            <person name="Holt K."/>
            <person name="Howden P.J."/>
            <person name="Hunt A.R."/>
            <person name="Hunt S.E."/>
            <person name="Hunter G."/>
            <person name="Isherwood J."/>
            <person name="James R."/>
            <person name="Johnson C."/>
            <person name="Johnson D."/>
            <person name="Joy A."/>
            <person name="Kay M."/>
            <person name="Kershaw J.K."/>
            <person name="Kibukawa M."/>
            <person name="Kimberley A.M."/>
            <person name="King A."/>
            <person name="Knights A.J."/>
            <person name="Lad H."/>
            <person name="Laird G."/>
            <person name="Lawlor S."/>
            <person name="Leongamornlert D.A."/>
            <person name="Lloyd D.M."/>
            <person name="Loveland J."/>
            <person name="Lovell J."/>
            <person name="Lush M.J."/>
            <person name="Lyne R."/>
            <person name="Martin S."/>
            <person name="Mashreghi-Mohammadi M."/>
            <person name="Matthews L."/>
            <person name="Matthews N.S.W."/>
            <person name="McLaren S."/>
            <person name="Milne S."/>
            <person name="Mistry S."/>
            <person name="Moore M.J.F."/>
            <person name="Nickerson T."/>
            <person name="O'Dell C.N."/>
            <person name="Oliver K."/>
            <person name="Palmeiri A."/>
            <person name="Palmer S.A."/>
            <person name="Parker A."/>
            <person name="Patel D."/>
            <person name="Pearce A.V."/>
            <person name="Peck A.I."/>
            <person name="Pelan S."/>
            <person name="Phelps K."/>
            <person name="Phillimore B.J."/>
            <person name="Plumb R."/>
            <person name="Rajan J."/>
            <person name="Raymond C."/>
            <person name="Rouse G."/>
            <person name="Saenphimmachak C."/>
            <person name="Sehra H.K."/>
            <person name="Sheridan E."/>
            <person name="Shownkeen R."/>
            <person name="Sims S."/>
            <person name="Skuce C.D."/>
            <person name="Smith M."/>
            <person name="Steward C."/>
            <person name="Subramanian S."/>
            <person name="Sycamore N."/>
            <person name="Tracey A."/>
            <person name="Tromans A."/>
            <person name="Van Helmond Z."/>
            <person name="Wall M."/>
            <person name="Wallis J.M."/>
            <person name="White S."/>
            <person name="Whitehead S.L."/>
            <person name="Wilkinson J.E."/>
            <person name="Willey D.L."/>
            <person name="Williams H."/>
            <person name="Wilming L."/>
            <person name="Wray P.W."/>
            <person name="Wu Z."/>
            <person name="Coulson A."/>
            <person name="Vaudin M."/>
            <person name="Sulston J.E."/>
            <person name="Durbin R.M."/>
            <person name="Hubbard T."/>
            <person name="Wooster R."/>
            <person name="Dunham I."/>
            <person name="Carter N.P."/>
            <person name="McVean G."/>
            <person name="Ross M.T."/>
            <person name="Harrow J."/>
            <person name="Olson M.V."/>
            <person name="Beck S."/>
            <person name="Rogers J."/>
            <person name="Bentley D.R."/>
        </authorList>
    </citation>
    <scope>NUCLEOTIDE SEQUENCE [LARGE SCALE GENOMIC DNA]</scope>
</reference>
<reference key="2">
    <citation type="journal article" date="2004" name="Genome Res.">
        <title>The status, quality, and expansion of the NIH full-length cDNA project: the Mammalian Gene Collection (MGC).</title>
        <authorList>
            <consortium name="The MGC Project Team"/>
        </authorList>
    </citation>
    <scope>NUCLEOTIDE SEQUENCE [LARGE SCALE MRNA]</scope>
</reference>
<reference key="3">
    <citation type="journal article" date="2013" name="Biochem. J.">
        <title>NRMT2 is an N-terminal monomethylase that primes for its homologue NRMT1.</title>
        <authorList>
            <person name="Petkowski J.J."/>
            <person name="Bonsignore L.A."/>
            <person name="Tooley J.G."/>
            <person name="Wilkey D.W."/>
            <person name="Merchant M.L."/>
            <person name="Macara I.G."/>
            <person name="Schaner Tooley C.E."/>
        </authorList>
    </citation>
    <scope>FUNCTION</scope>
    <scope>CATALYTIC ACTIVITY</scope>
    <scope>SUBCELLULAR LOCATION</scope>
</reference>
<reference evidence="7 8" key="4">
    <citation type="journal article" date="2018" name="Commun. Biol.">
        <title>An asparagine/glycine switch governs product specificity of human N-terminal methyltransferase NTMT2.</title>
        <authorList>
            <person name="Dong C."/>
            <person name="Dong G."/>
            <person name="Li L."/>
            <person name="Zhu L."/>
            <person name="Tempel W."/>
            <person name="Liu Y."/>
            <person name="Huang R."/>
            <person name="Min J."/>
        </authorList>
    </citation>
    <scope>X-RAY CRYSTALLOGRAPHY (1.20 ANGSTROMS) OF 58-278 IN COMPLEX WITH PEPTIDE SUBSTRATE AND S-ADENOSYL-L-METHIONINE</scope>
    <scope>MUTAGENESIS OF ASN-89</scope>
    <scope>FUNCTION</scope>
    <scope>CATALYTIC ACTIVITY</scope>
</reference>
<accession>Q5VVY1</accession>
<accession>B2RXI0</accession>
<name>NTM1B_HUMAN</name>
<protein>
    <recommendedName>
        <fullName>N-terminal Xaa-Pro-Lys N-methyltransferase 2</fullName>
        <ecNumber evidence="1 2">2.1.1.299</ecNumber>
    </recommendedName>
    <alternativeName>
        <fullName>Alpha N-terminal protein methyltransferase 1B</fullName>
    </alternativeName>
    <alternativeName>
        <fullName>Methyltransferase-like protein 11B</fullName>
    </alternativeName>
    <alternativeName>
        <fullName>X-Pro-Lys N-terminal protein methyltransferase 1B</fullName>
        <shortName>NTM1B</shortName>
    </alternativeName>
</protein>
<evidence type="ECO:0000269" key="1">
    <source>
    </source>
</evidence>
<evidence type="ECO:0000269" key="2">
    <source>
    </source>
</evidence>
<evidence type="ECO:0000303" key="3">
    <source>
    </source>
</evidence>
<evidence type="ECO:0000305" key="4"/>
<evidence type="ECO:0000305" key="5">
    <source>
    </source>
</evidence>
<evidence type="ECO:0000312" key="6">
    <source>
        <dbReference type="HGNC" id="HGNC:31932"/>
    </source>
</evidence>
<evidence type="ECO:0007744" key="7">
    <source>
        <dbReference type="PDB" id="5UBB"/>
    </source>
</evidence>
<evidence type="ECO:0007744" key="8">
    <source>
        <dbReference type="PDB" id="6DUB"/>
    </source>
</evidence>
<evidence type="ECO:0007829" key="9">
    <source>
        <dbReference type="PDB" id="6DUB"/>
    </source>
</evidence>
<sequence length="283" mass="32400">MAHRGAHFAFRSRWQKTDDELCRHSMSFILHKAIRNDFFQSYLYLLEKIPLVKLYALTSQVINGEMQFYARAKLFYQEVPATEEGMMGNFIELSSPDIQASQKFLRKFVGGPGRAGTDCALDCGSGIGRVSKHVLLPVFNSVELVDMMESFLLEAQNYLQVKGDKVESYHCYSLQEFTPPFRRYDVIWIQWVSGHLTDKDLLAFLSRCRDGLKENGIIILKDNVAREGCILDLSDSSVTRDMDILRSLIRKSGLVVLGQEKQDGFPEQCIPVWMFALHSDRHS</sequence>
<feature type="chain" id="PRO_0000271077" description="N-terminal Xaa-Pro-Lys N-methyltransferase 2">
    <location>
        <begin position="1"/>
        <end position="283"/>
    </location>
</feature>
<feature type="binding site" evidence="2 7">
    <location>
        <position position="124"/>
    </location>
    <ligand>
        <name>S-adenosyl-L-methionine</name>
        <dbReference type="ChEBI" id="CHEBI:59789"/>
    </ligand>
</feature>
<feature type="binding site" evidence="2 7">
    <location>
        <position position="129"/>
    </location>
    <ligand>
        <name>S-adenosyl-L-methionine</name>
        <dbReference type="ChEBI" id="CHEBI:59789"/>
    </ligand>
</feature>
<feature type="binding site" evidence="2 7">
    <location>
        <position position="146"/>
    </location>
    <ligand>
        <name>S-adenosyl-L-methionine</name>
        <dbReference type="ChEBI" id="CHEBI:59789"/>
    </ligand>
</feature>
<feature type="binding site" evidence="2 7">
    <location>
        <begin position="174"/>
        <end position="175"/>
    </location>
    <ligand>
        <name>S-adenosyl-L-methionine</name>
        <dbReference type="ChEBI" id="CHEBI:59789"/>
    </ligand>
</feature>
<feature type="binding site" evidence="2">
    <location>
        <position position="190"/>
    </location>
    <ligand>
        <name>S-adenosyl-L-methionine</name>
        <dbReference type="ChEBI" id="CHEBI:59789"/>
    </ligand>
</feature>
<feature type="binding site" evidence="2 7">
    <location>
        <position position="195"/>
    </location>
    <ligand>
        <name>S-adenosyl-L-methionine</name>
        <dbReference type="ChEBI" id="CHEBI:59789"/>
    </ligand>
</feature>
<feature type="sequence variant" id="VAR_060621" description="In dbSNP:rs12073565.">
    <original>A</original>
    <variation>G</variation>
    <location>
        <position position="72"/>
    </location>
</feature>
<feature type="sequence variant" id="VAR_029859" description="In dbSNP:rs6427235.">
    <original>S</original>
    <variation>P</variation>
    <location>
        <position position="150"/>
    </location>
</feature>
<feature type="sequence variant" id="VAR_060622" description="In dbSNP:rs12735494.">
    <original>S</original>
    <variation>R</variation>
    <location>
        <position position="247"/>
    </location>
</feature>
<feature type="mutagenesis site" description="Increases methylation activity. Higher affinity for mono-methylated peptide than wild-type." evidence="2">
    <original>N</original>
    <variation>G</variation>
    <location>
        <position position="89"/>
    </location>
</feature>
<feature type="turn" evidence="9">
    <location>
        <begin position="59"/>
        <end position="62"/>
    </location>
</feature>
<feature type="helix" evidence="9">
    <location>
        <begin position="64"/>
        <end position="76"/>
    </location>
</feature>
<feature type="helix" evidence="9">
    <location>
        <begin position="83"/>
        <end position="86"/>
    </location>
</feature>
<feature type="turn" evidence="9">
    <location>
        <begin position="87"/>
        <end position="89"/>
    </location>
</feature>
<feature type="helix" evidence="9">
    <location>
        <begin position="91"/>
        <end position="93"/>
    </location>
</feature>
<feature type="helix" evidence="9">
    <location>
        <begin position="94"/>
        <end position="105"/>
    </location>
</feature>
<feature type="turn" evidence="9">
    <location>
        <begin position="106"/>
        <end position="108"/>
    </location>
</feature>
<feature type="strand" evidence="9">
    <location>
        <begin position="109"/>
        <end position="111"/>
    </location>
</feature>
<feature type="strand" evidence="9">
    <location>
        <begin position="117"/>
        <end position="123"/>
    </location>
</feature>
<feature type="turn" evidence="9">
    <location>
        <begin position="126"/>
        <end position="128"/>
    </location>
</feature>
<feature type="helix" evidence="9">
    <location>
        <begin position="129"/>
        <end position="133"/>
    </location>
</feature>
<feature type="turn" evidence="9">
    <location>
        <begin position="134"/>
        <end position="138"/>
    </location>
</feature>
<feature type="strand" evidence="9">
    <location>
        <begin position="139"/>
        <end position="147"/>
    </location>
</feature>
<feature type="helix" evidence="9">
    <location>
        <begin position="149"/>
        <end position="158"/>
    </location>
</feature>
<feature type="helix" evidence="9">
    <location>
        <begin position="160"/>
        <end position="165"/>
    </location>
</feature>
<feature type="strand" evidence="9">
    <location>
        <begin position="166"/>
        <end position="171"/>
    </location>
</feature>
<feature type="helix" evidence="9">
    <location>
        <begin position="174"/>
        <end position="176"/>
    </location>
</feature>
<feature type="strand" evidence="9">
    <location>
        <begin position="184"/>
        <end position="191"/>
    </location>
</feature>
<feature type="helix" evidence="9">
    <location>
        <begin position="193"/>
        <end position="195"/>
    </location>
</feature>
<feature type="helix" evidence="9">
    <location>
        <begin position="198"/>
        <end position="210"/>
    </location>
</feature>
<feature type="strand" evidence="9">
    <location>
        <begin position="212"/>
        <end position="232"/>
    </location>
</feature>
<feature type="turn" evidence="9">
    <location>
        <begin position="233"/>
        <end position="236"/>
    </location>
</feature>
<feature type="strand" evidence="9">
    <location>
        <begin position="237"/>
        <end position="241"/>
    </location>
</feature>
<feature type="helix" evidence="9">
    <location>
        <begin position="242"/>
        <end position="251"/>
    </location>
</feature>
<feature type="strand" evidence="9">
    <location>
        <begin position="256"/>
        <end position="261"/>
    </location>
</feature>
<feature type="strand" evidence="9">
    <location>
        <begin position="272"/>
        <end position="277"/>
    </location>
</feature>
<organism>
    <name type="scientific">Homo sapiens</name>
    <name type="common">Human</name>
    <dbReference type="NCBI Taxonomy" id="9606"/>
    <lineage>
        <taxon>Eukaryota</taxon>
        <taxon>Metazoa</taxon>
        <taxon>Chordata</taxon>
        <taxon>Craniata</taxon>
        <taxon>Vertebrata</taxon>
        <taxon>Euteleostomi</taxon>
        <taxon>Mammalia</taxon>
        <taxon>Eutheria</taxon>
        <taxon>Euarchontoglires</taxon>
        <taxon>Primates</taxon>
        <taxon>Haplorrhini</taxon>
        <taxon>Catarrhini</taxon>
        <taxon>Hominidae</taxon>
        <taxon>Homo</taxon>
    </lineage>
</organism>
<dbReference type="EC" id="2.1.1.299" evidence="1 2"/>
<dbReference type="EMBL" id="AL445203">
    <property type="status" value="NOT_ANNOTATED_CDS"/>
    <property type="molecule type" value="Genomic_DNA"/>
</dbReference>
<dbReference type="EMBL" id="BC157860">
    <property type="protein sequence ID" value="AAI57861.1"/>
    <property type="molecule type" value="mRNA"/>
</dbReference>
<dbReference type="EMBL" id="BC171858">
    <property type="protein sequence ID" value="AAI71858.1"/>
    <property type="molecule type" value="mRNA"/>
</dbReference>
<dbReference type="CCDS" id="CCDS44275.1"/>
<dbReference type="RefSeq" id="NP_001129579.1">
    <property type="nucleotide sequence ID" value="NM_001136107.2"/>
</dbReference>
<dbReference type="PDB" id="5UBB">
    <property type="method" value="X-ray"/>
    <property type="resolution" value="2.00 A"/>
    <property type="chains" value="A=58-278"/>
</dbReference>
<dbReference type="PDB" id="6DUB">
    <property type="method" value="X-ray"/>
    <property type="resolution" value="1.20 A"/>
    <property type="chains" value="A/B=58-278"/>
</dbReference>
<dbReference type="PDB" id="6KDR">
    <property type="method" value="X-ray"/>
    <property type="resolution" value="2.11 A"/>
    <property type="chains" value="A/B=61-283"/>
</dbReference>
<dbReference type="PDB" id="6KDS">
    <property type="method" value="X-ray"/>
    <property type="resolution" value="1.84 A"/>
    <property type="chains" value="A=61-283"/>
</dbReference>
<dbReference type="PDBsum" id="5UBB"/>
<dbReference type="PDBsum" id="6DUB"/>
<dbReference type="PDBsum" id="6KDR"/>
<dbReference type="PDBsum" id="6KDS"/>
<dbReference type="SMR" id="Q5VVY1"/>
<dbReference type="FunCoup" id="Q5VVY1">
    <property type="interactions" value="501"/>
</dbReference>
<dbReference type="STRING" id="9606.ENSP00000408058"/>
<dbReference type="BindingDB" id="Q5VVY1"/>
<dbReference type="ChEMBL" id="CHEMBL4630834"/>
<dbReference type="GlyGen" id="Q5VVY1">
    <property type="glycosylation" value="1 site, 1 O-linked glycan (1 site)"/>
</dbReference>
<dbReference type="iPTMnet" id="Q5VVY1"/>
<dbReference type="PhosphoSitePlus" id="Q5VVY1"/>
<dbReference type="BioMuta" id="METTL11B"/>
<dbReference type="DMDM" id="269849617"/>
<dbReference type="PaxDb" id="9606-ENSP00000408058"/>
<dbReference type="Antibodypedia" id="34370">
    <property type="antibodies" value="67 antibodies from 15 providers"/>
</dbReference>
<dbReference type="DNASU" id="149281"/>
<dbReference type="Ensembl" id="ENST00000439373.3">
    <property type="protein sequence ID" value="ENSP00000408058.3"/>
    <property type="gene ID" value="ENSG00000203740.4"/>
</dbReference>
<dbReference type="GeneID" id="149281"/>
<dbReference type="KEGG" id="hsa:149281"/>
<dbReference type="MANE-Select" id="ENST00000439373.3">
    <property type="protein sequence ID" value="ENSP00000408058.3"/>
    <property type="RefSeq nucleotide sequence ID" value="NM_001136107.2"/>
    <property type="RefSeq protein sequence ID" value="NP_001129579.1"/>
</dbReference>
<dbReference type="UCSC" id="uc009wvv.2">
    <property type="organism name" value="human"/>
</dbReference>
<dbReference type="AGR" id="HGNC:31932"/>
<dbReference type="CTD" id="149281"/>
<dbReference type="DisGeNET" id="149281"/>
<dbReference type="GeneCards" id="NTMT2"/>
<dbReference type="HGNC" id="HGNC:31932">
    <property type="gene designation" value="NTMT2"/>
</dbReference>
<dbReference type="HPA" id="ENSG00000203740">
    <property type="expression patterns" value="Tissue enhanced (heart)"/>
</dbReference>
<dbReference type="neXtProt" id="NX_Q5VVY1"/>
<dbReference type="OpenTargets" id="ENSG00000203740"/>
<dbReference type="VEuPathDB" id="HostDB:ENSG00000203740"/>
<dbReference type="eggNOG" id="KOG3178">
    <property type="taxonomic scope" value="Eukaryota"/>
</dbReference>
<dbReference type="GeneTree" id="ENSGT00390000008371"/>
<dbReference type="HOGENOM" id="CLU_055356_3_0_1"/>
<dbReference type="InParanoid" id="Q5VVY1"/>
<dbReference type="OMA" id="ETYYCFN"/>
<dbReference type="OrthoDB" id="1864at9604"/>
<dbReference type="PAN-GO" id="Q5VVY1">
    <property type="GO annotations" value="3 GO annotations based on evolutionary models"/>
</dbReference>
<dbReference type="PhylomeDB" id="Q5VVY1"/>
<dbReference type="TreeFam" id="TF314174"/>
<dbReference type="BRENDA" id="2.1.1.299">
    <property type="organism ID" value="2681"/>
</dbReference>
<dbReference type="PathwayCommons" id="Q5VVY1"/>
<dbReference type="BioGRID-ORCS" id="149281">
    <property type="hits" value="6 hits in 1145 CRISPR screens"/>
</dbReference>
<dbReference type="ChiTaRS" id="METTL11B">
    <property type="organism name" value="human"/>
</dbReference>
<dbReference type="GenomeRNAi" id="149281"/>
<dbReference type="Pharos" id="Q5VVY1">
    <property type="development level" value="Tchem"/>
</dbReference>
<dbReference type="PRO" id="PR:Q5VVY1"/>
<dbReference type="Proteomes" id="UP000005640">
    <property type="component" value="Chromosome 1"/>
</dbReference>
<dbReference type="RNAct" id="Q5VVY1">
    <property type="molecule type" value="protein"/>
</dbReference>
<dbReference type="Bgee" id="ENSG00000203740">
    <property type="expression patterns" value="Expressed in male germ line stem cell (sensu Vertebrata) in testis and 19 other cell types or tissues"/>
</dbReference>
<dbReference type="GO" id="GO:0005737">
    <property type="term" value="C:cytoplasm"/>
    <property type="evidence" value="ECO:0000318"/>
    <property type="project" value="GO_Central"/>
</dbReference>
<dbReference type="GO" id="GO:0005634">
    <property type="term" value="C:nucleus"/>
    <property type="evidence" value="ECO:0000314"/>
    <property type="project" value="UniProtKB"/>
</dbReference>
<dbReference type="GO" id="GO:0071885">
    <property type="term" value="F:N-terminal protein N-methyltransferase activity"/>
    <property type="evidence" value="ECO:0000314"/>
    <property type="project" value="UniProtKB"/>
</dbReference>
<dbReference type="GO" id="GO:0006480">
    <property type="term" value="P:N-terminal protein amino acid methylation"/>
    <property type="evidence" value="ECO:0000314"/>
    <property type="project" value="UniProtKB"/>
</dbReference>
<dbReference type="CDD" id="cd02440">
    <property type="entry name" value="AdoMet_MTases"/>
    <property type="match status" value="1"/>
</dbReference>
<dbReference type="FunFam" id="3.40.50.150:FF:000025">
    <property type="entry name" value="N-terminal Xaa-Pro-Lys N-methyltransferase 1"/>
    <property type="match status" value="1"/>
</dbReference>
<dbReference type="Gene3D" id="3.40.50.150">
    <property type="entry name" value="Vaccinia Virus protein VP39"/>
    <property type="match status" value="1"/>
</dbReference>
<dbReference type="InterPro" id="IPR008576">
    <property type="entry name" value="MeTrfase_NTM1"/>
</dbReference>
<dbReference type="InterPro" id="IPR029063">
    <property type="entry name" value="SAM-dependent_MTases_sf"/>
</dbReference>
<dbReference type="PANTHER" id="PTHR12753">
    <property type="entry name" value="AD-003 - RELATED"/>
    <property type="match status" value="1"/>
</dbReference>
<dbReference type="PANTHER" id="PTHR12753:SF2">
    <property type="entry name" value="N-TERMINAL XAA-PRO-LYS N-METHYLTRANSFERASE 2"/>
    <property type="match status" value="1"/>
</dbReference>
<dbReference type="Pfam" id="PF05891">
    <property type="entry name" value="Methyltransf_PK"/>
    <property type="match status" value="1"/>
</dbReference>
<dbReference type="SUPFAM" id="SSF53335">
    <property type="entry name" value="S-adenosyl-L-methionine-dependent methyltransferases"/>
    <property type="match status" value="1"/>
</dbReference>
<comment type="function">
    <text evidence="1 2">Alpha N-methyltransferase that methylates the N-terminus of target proteins containing the N-terminal motif [Ala/Pro/Ser]-Pro-Lys when the initiator Met is cleaved. Specifically catalyzes monomethylation of exposed alpha-amino group of Ala or Ser residue in the [Ala/Ser]-Pro-Lys motif and Pro in the Pro-Pro-Lys motif (PubMed:24090352, PubMed:30417120). Predominantly functions as a mono-methyltransferase but is also able to di-/tri-methylate the GPKRIA peptide and di-methylate the PPKRIA peptide (in vitro) (PubMed:30417120). May activate NTMT1 by priming its substrates for trimethylation (PubMed:24090352).</text>
</comment>
<comment type="catalytic activity">
    <reaction evidence="1">
        <text>N-terminal L-alanyl-L-prolyl-L-lysyl-[protein] + S-adenosyl-L-methionine = N-terminal N-methyl-L-alanyl-L-prolyl-L-lysyl-[protein] + S-adenosyl-L-homocysteine + H(+)</text>
        <dbReference type="Rhea" id="RHEA:54096"/>
        <dbReference type="Rhea" id="RHEA-COMP:13785"/>
        <dbReference type="Rhea" id="RHEA-COMP:13786"/>
        <dbReference type="ChEBI" id="CHEBI:15378"/>
        <dbReference type="ChEBI" id="CHEBI:57856"/>
        <dbReference type="ChEBI" id="CHEBI:59789"/>
        <dbReference type="ChEBI" id="CHEBI:138057"/>
        <dbReference type="ChEBI" id="CHEBI:138058"/>
        <dbReference type="EC" id="2.1.1.299"/>
    </reaction>
    <physiologicalReaction direction="left-to-right" evidence="5">
        <dbReference type="Rhea" id="RHEA:54097"/>
    </physiologicalReaction>
</comment>
<comment type="catalytic activity">
    <reaction evidence="1">
        <text>N-terminal L-prolyl-L-prolyl-L-lysyl-[protein] + S-adenosyl-L-methionine = N-terminal N-methyl-L-prolyl-L-prolyl-L-lysyl-[protein] + S-adenosyl-L-homocysteine + H(+)</text>
        <dbReference type="Rhea" id="RHEA:54100"/>
        <dbReference type="Rhea" id="RHEA-COMP:13787"/>
        <dbReference type="Rhea" id="RHEA-COMP:13788"/>
        <dbReference type="ChEBI" id="CHEBI:15378"/>
        <dbReference type="ChEBI" id="CHEBI:57856"/>
        <dbReference type="ChEBI" id="CHEBI:59789"/>
        <dbReference type="ChEBI" id="CHEBI:138059"/>
        <dbReference type="ChEBI" id="CHEBI:138060"/>
        <dbReference type="EC" id="2.1.1.299"/>
    </reaction>
    <physiologicalReaction direction="left-to-right" evidence="5">
        <dbReference type="Rhea" id="RHEA:54101"/>
    </physiologicalReaction>
</comment>
<comment type="catalytic activity">
    <reaction evidence="1 2">
        <text>N-terminal L-seryl-L-prolyl-L-lysyl-[protein] + S-adenosyl-L-methionine = N-terminal N-methyl-L-seryl-L-prolyl-L-lysyl-[protein] + S-adenosyl-L-homocysteine + H(+)</text>
        <dbReference type="Rhea" id="RHEA:54104"/>
        <dbReference type="Rhea" id="RHEA-COMP:13789"/>
        <dbReference type="Rhea" id="RHEA-COMP:13790"/>
        <dbReference type="ChEBI" id="CHEBI:15378"/>
        <dbReference type="ChEBI" id="CHEBI:57856"/>
        <dbReference type="ChEBI" id="CHEBI:59789"/>
        <dbReference type="ChEBI" id="CHEBI:138061"/>
        <dbReference type="ChEBI" id="CHEBI:138062"/>
        <dbReference type="EC" id="2.1.1.299"/>
    </reaction>
    <physiologicalReaction direction="left-to-right" evidence="5">
        <dbReference type="Rhea" id="RHEA:54105"/>
    </physiologicalReaction>
</comment>
<comment type="subcellular location">
    <subcellularLocation>
        <location evidence="1">Nucleus</location>
    </subcellularLocation>
</comment>
<comment type="similarity">
    <text evidence="4">Belongs to the methyltransferase superfamily. NTM1 family.</text>
</comment>
<gene>
    <name evidence="6" type="primary">NTMT2</name>
    <name type="synonym">C1orf184</name>
    <name type="synonym">METTL11B</name>
    <name evidence="3" type="synonym">NRMT2</name>
</gene>
<keyword id="KW-0002">3D-structure</keyword>
<keyword id="KW-0489">Methyltransferase</keyword>
<keyword id="KW-0539">Nucleus</keyword>
<keyword id="KW-1185">Reference proteome</keyword>
<keyword id="KW-0949">S-adenosyl-L-methionine</keyword>
<keyword id="KW-0808">Transferase</keyword>